<reference key="1">
    <citation type="journal article" date="2005" name="J. Bacteriol.">
        <title>Whole-genome sequencing of Staphylococcus haemolyticus uncovers the extreme plasticity of its genome and the evolution of human-colonizing staphylococcal species.</title>
        <authorList>
            <person name="Takeuchi F."/>
            <person name="Watanabe S."/>
            <person name="Baba T."/>
            <person name="Yuzawa H."/>
            <person name="Ito T."/>
            <person name="Morimoto Y."/>
            <person name="Kuroda M."/>
            <person name="Cui L."/>
            <person name="Takahashi M."/>
            <person name="Ankai A."/>
            <person name="Baba S."/>
            <person name="Fukui S."/>
            <person name="Lee J.C."/>
            <person name="Hiramatsu K."/>
        </authorList>
    </citation>
    <scope>NUCLEOTIDE SEQUENCE [LARGE SCALE GENOMIC DNA]</scope>
    <source>
        <strain>JCSC1435</strain>
    </source>
</reference>
<proteinExistence type="inferred from homology"/>
<keyword id="KW-0067">ATP-binding</keyword>
<keyword id="KW-0963">Cytoplasm</keyword>
<keyword id="KW-0227">DNA damage</keyword>
<keyword id="KW-0228">DNA excision</keyword>
<keyword id="KW-0234">DNA repair</keyword>
<keyword id="KW-0267">Excision nuclease</keyword>
<keyword id="KW-0547">Nucleotide-binding</keyword>
<keyword id="KW-0742">SOS response</keyword>
<sequence length="661" mass="76759">MVEHYPFKLNSEFDPQGDQPQAIEKIVKGVKEGKRHQTLLGATGTGKTFTMSNVIKEVGKPTLIIAHNKTLAGQLYSEFKEFFPENRVEYFVSYYDYYQPEAYVPSTDTFIEKDASINDEIDQLRHSATSALFERDDVIIIASVSCIYGLGNPEEYKDLVVSVRVGMEMDRSELLRKLVDVQYSRNDIDFQRGTFRVRGDVVEIFPASREEMCIRVEFFGDEIDRIREVNYLTGEVIREREHFAIFPASHFVTREEKMKIAIERIEKELEERLKELKDENKLLEAQRLEQRTNYDLEMMREMGFCSGIENYSVHLTLRPLGSTPYTLLDYFGDDWLVMIDESHVTLPQIRGMFNGDRARKQVLVDHGFRLPSAMDNRPLKFEEFEQKTNQLVYVSATPGPYEIEHTDEMIEQIIRPTGLLDPKIDVRPTKNQIDDLLSEIQERIDRDERVLVTTLTKKMSEDLTTYMKEAGIKVNYLHSEIKTLERIEIIRDLRMGTYDVVVGINLLREGIDIPEVSLVVILDADKEGFLRSNRSLIQTIGRAARNEKGEVIMYADKITDSMQYALDETQRRRDIQTAHNEKYGITPKTINKKIHDVISATVDNDETNEKQQTELPKKMTKKERQKTIENIEKEMKKAAKDLDFEKATELRDMLFELKSEG</sequence>
<comment type="function">
    <text evidence="1">The UvrABC repair system catalyzes the recognition and processing of DNA lesions. A damage recognition complex composed of 2 UvrA and 2 UvrB subunits scans DNA for abnormalities. Upon binding of the UvrA(2)B(2) complex to a putative damaged site, the DNA wraps around one UvrB monomer. DNA wrap is dependent on ATP binding by UvrB and probably causes local melting of the DNA helix, facilitating insertion of UvrB beta-hairpin between the DNA strands. Then UvrB probes one DNA strand for the presence of a lesion. If a lesion is found the UvrA subunits dissociate and the UvrB-DNA preincision complex is formed. This complex is subsequently bound by UvrC and the second UvrB is released. If no lesion is found, the DNA wraps around the other UvrB subunit that will check the other stand for damage.</text>
</comment>
<comment type="subunit">
    <text evidence="1">Forms a heterotetramer with UvrA during the search for lesions. Interacts with UvrC in an incision complex.</text>
</comment>
<comment type="subcellular location">
    <subcellularLocation>
        <location evidence="1">Cytoplasm</location>
    </subcellularLocation>
</comment>
<comment type="domain">
    <text evidence="1">The beta-hairpin motif is involved in DNA binding.</text>
</comment>
<comment type="similarity">
    <text evidence="1">Belongs to the UvrB family.</text>
</comment>
<dbReference type="EMBL" id="AP006716">
    <property type="protein sequence ID" value="BAE05440.1"/>
    <property type="molecule type" value="Genomic_DNA"/>
</dbReference>
<dbReference type="RefSeq" id="WP_011276395.1">
    <property type="nucleotide sequence ID" value="NC_007168.1"/>
</dbReference>
<dbReference type="SMR" id="Q4L4I5"/>
<dbReference type="KEGG" id="sha:SH2131"/>
<dbReference type="eggNOG" id="COG0556">
    <property type="taxonomic scope" value="Bacteria"/>
</dbReference>
<dbReference type="HOGENOM" id="CLU_009621_2_1_9"/>
<dbReference type="OrthoDB" id="9806651at2"/>
<dbReference type="Proteomes" id="UP000000543">
    <property type="component" value="Chromosome"/>
</dbReference>
<dbReference type="GO" id="GO:0005737">
    <property type="term" value="C:cytoplasm"/>
    <property type="evidence" value="ECO:0007669"/>
    <property type="project" value="UniProtKB-SubCell"/>
</dbReference>
<dbReference type="GO" id="GO:0009380">
    <property type="term" value="C:excinuclease repair complex"/>
    <property type="evidence" value="ECO:0007669"/>
    <property type="project" value="InterPro"/>
</dbReference>
<dbReference type="GO" id="GO:0005524">
    <property type="term" value="F:ATP binding"/>
    <property type="evidence" value="ECO:0007669"/>
    <property type="project" value="UniProtKB-UniRule"/>
</dbReference>
<dbReference type="GO" id="GO:0016887">
    <property type="term" value="F:ATP hydrolysis activity"/>
    <property type="evidence" value="ECO:0007669"/>
    <property type="project" value="InterPro"/>
</dbReference>
<dbReference type="GO" id="GO:0003677">
    <property type="term" value="F:DNA binding"/>
    <property type="evidence" value="ECO:0007669"/>
    <property type="project" value="UniProtKB-UniRule"/>
</dbReference>
<dbReference type="GO" id="GO:0009381">
    <property type="term" value="F:excinuclease ABC activity"/>
    <property type="evidence" value="ECO:0007669"/>
    <property type="project" value="UniProtKB-UniRule"/>
</dbReference>
<dbReference type="GO" id="GO:0006289">
    <property type="term" value="P:nucleotide-excision repair"/>
    <property type="evidence" value="ECO:0007669"/>
    <property type="project" value="UniProtKB-UniRule"/>
</dbReference>
<dbReference type="GO" id="GO:0009432">
    <property type="term" value="P:SOS response"/>
    <property type="evidence" value="ECO:0007669"/>
    <property type="project" value="UniProtKB-UniRule"/>
</dbReference>
<dbReference type="CDD" id="cd17916">
    <property type="entry name" value="DEXHc_UvrB"/>
    <property type="match status" value="1"/>
</dbReference>
<dbReference type="CDD" id="cd18790">
    <property type="entry name" value="SF2_C_UvrB"/>
    <property type="match status" value="1"/>
</dbReference>
<dbReference type="Gene3D" id="3.40.50.300">
    <property type="entry name" value="P-loop containing nucleotide triphosphate hydrolases"/>
    <property type="match status" value="3"/>
</dbReference>
<dbReference type="Gene3D" id="4.10.860.10">
    <property type="entry name" value="UVR domain"/>
    <property type="match status" value="1"/>
</dbReference>
<dbReference type="HAMAP" id="MF_00204">
    <property type="entry name" value="UvrB"/>
    <property type="match status" value="1"/>
</dbReference>
<dbReference type="InterPro" id="IPR006935">
    <property type="entry name" value="Helicase/UvrB_N"/>
</dbReference>
<dbReference type="InterPro" id="IPR014001">
    <property type="entry name" value="Helicase_ATP-bd"/>
</dbReference>
<dbReference type="InterPro" id="IPR001650">
    <property type="entry name" value="Helicase_C-like"/>
</dbReference>
<dbReference type="InterPro" id="IPR027417">
    <property type="entry name" value="P-loop_NTPase"/>
</dbReference>
<dbReference type="InterPro" id="IPR001943">
    <property type="entry name" value="UVR_dom"/>
</dbReference>
<dbReference type="InterPro" id="IPR036876">
    <property type="entry name" value="UVR_dom_sf"/>
</dbReference>
<dbReference type="InterPro" id="IPR004807">
    <property type="entry name" value="UvrB"/>
</dbReference>
<dbReference type="InterPro" id="IPR041471">
    <property type="entry name" value="UvrB_inter"/>
</dbReference>
<dbReference type="InterPro" id="IPR024759">
    <property type="entry name" value="UvrB_YAD/RRR_dom"/>
</dbReference>
<dbReference type="NCBIfam" id="NF003673">
    <property type="entry name" value="PRK05298.1"/>
    <property type="match status" value="1"/>
</dbReference>
<dbReference type="NCBIfam" id="TIGR00631">
    <property type="entry name" value="uvrb"/>
    <property type="match status" value="1"/>
</dbReference>
<dbReference type="PANTHER" id="PTHR24029">
    <property type="entry name" value="UVRABC SYSTEM PROTEIN B"/>
    <property type="match status" value="1"/>
</dbReference>
<dbReference type="PANTHER" id="PTHR24029:SF0">
    <property type="entry name" value="UVRABC SYSTEM PROTEIN B"/>
    <property type="match status" value="1"/>
</dbReference>
<dbReference type="Pfam" id="PF00271">
    <property type="entry name" value="Helicase_C"/>
    <property type="match status" value="1"/>
</dbReference>
<dbReference type="Pfam" id="PF04851">
    <property type="entry name" value="ResIII"/>
    <property type="match status" value="1"/>
</dbReference>
<dbReference type="Pfam" id="PF02151">
    <property type="entry name" value="UVR"/>
    <property type="match status" value="1"/>
</dbReference>
<dbReference type="Pfam" id="PF12344">
    <property type="entry name" value="UvrB"/>
    <property type="match status" value="1"/>
</dbReference>
<dbReference type="Pfam" id="PF17757">
    <property type="entry name" value="UvrB_inter"/>
    <property type="match status" value="1"/>
</dbReference>
<dbReference type="SMART" id="SM00487">
    <property type="entry name" value="DEXDc"/>
    <property type="match status" value="1"/>
</dbReference>
<dbReference type="SMART" id="SM00490">
    <property type="entry name" value="HELICc"/>
    <property type="match status" value="1"/>
</dbReference>
<dbReference type="SUPFAM" id="SSF46600">
    <property type="entry name" value="C-terminal UvrC-binding domain of UvrB"/>
    <property type="match status" value="1"/>
</dbReference>
<dbReference type="SUPFAM" id="SSF52540">
    <property type="entry name" value="P-loop containing nucleoside triphosphate hydrolases"/>
    <property type="match status" value="2"/>
</dbReference>
<dbReference type="PROSITE" id="PS51192">
    <property type="entry name" value="HELICASE_ATP_BIND_1"/>
    <property type="match status" value="1"/>
</dbReference>
<dbReference type="PROSITE" id="PS51194">
    <property type="entry name" value="HELICASE_CTER"/>
    <property type="match status" value="1"/>
</dbReference>
<dbReference type="PROSITE" id="PS50151">
    <property type="entry name" value="UVR"/>
    <property type="match status" value="1"/>
</dbReference>
<organism>
    <name type="scientific">Staphylococcus haemolyticus (strain JCSC1435)</name>
    <dbReference type="NCBI Taxonomy" id="279808"/>
    <lineage>
        <taxon>Bacteria</taxon>
        <taxon>Bacillati</taxon>
        <taxon>Bacillota</taxon>
        <taxon>Bacilli</taxon>
        <taxon>Bacillales</taxon>
        <taxon>Staphylococcaceae</taxon>
        <taxon>Staphylococcus</taxon>
    </lineage>
</organism>
<protein>
    <recommendedName>
        <fullName evidence="1">UvrABC system protein B</fullName>
        <shortName evidence="1">Protein UvrB</shortName>
    </recommendedName>
    <alternativeName>
        <fullName evidence="1">Excinuclease ABC subunit B</fullName>
    </alternativeName>
</protein>
<feature type="chain" id="PRO_0000227363" description="UvrABC system protein B">
    <location>
        <begin position="1"/>
        <end position="661"/>
    </location>
</feature>
<feature type="domain" description="Helicase ATP-binding" evidence="1">
    <location>
        <begin position="28"/>
        <end position="414"/>
    </location>
</feature>
<feature type="domain" description="Helicase C-terminal" evidence="1">
    <location>
        <begin position="432"/>
        <end position="598"/>
    </location>
</feature>
<feature type="domain" description="UVR" evidence="1">
    <location>
        <begin position="625"/>
        <end position="660"/>
    </location>
</feature>
<feature type="region of interest" description="Disordered" evidence="2">
    <location>
        <begin position="604"/>
        <end position="625"/>
    </location>
</feature>
<feature type="short sequence motif" description="Beta-hairpin">
    <location>
        <begin position="94"/>
        <end position="117"/>
    </location>
</feature>
<feature type="compositionally biased region" description="Basic and acidic residues" evidence="2">
    <location>
        <begin position="607"/>
        <end position="617"/>
    </location>
</feature>
<feature type="binding site" evidence="1">
    <location>
        <begin position="41"/>
        <end position="48"/>
    </location>
    <ligand>
        <name>ATP</name>
        <dbReference type="ChEBI" id="CHEBI:30616"/>
    </ligand>
</feature>
<accession>Q4L4I5</accession>
<evidence type="ECO:0000255" key="1">
    <source>
        <dbReference type="HAMAP-Rule" id="MF_00204"/>
    </source>
</evidence>
<evidence type="ECO:0000256" key="2">
    <source>
        <dbReference type="SAM" id="MobiDB-lite"/>
    </source>
</evidence>
<gene>
    <name evidence="1" type="primary">uvrB</name>
    <name type="ordered locus">SH2131</name>
</gene>
<name>UVRB_STAHJ</name>